<dbReference type="EC" id="3.6.5.4" evidence="1"/>
<dbReference type="EMBL" id="U00089">
    <property type="protein sequence ID" value="AAB95741.1"/>
    <property type="molecule type" value="Genomic_DNA"/>
</dbReference>
<dbReference type="PIR" id="S73419">
    <property type="entry name" value="S73419"/>
</dbReference>
<dbReference type="RefSeq" id="NP_109749.1">
    <property type="nucleotide sequence ID" value="NC_000912.1"/>
</dbReference>
<dbReference type="RefSeq" id="WP_010874418.1">
    <property type="nucleotide sequence ID" value="NZ_OU342337.1"/>
</dbReference>
<dbReference type="SMR" id="P75054"/>
<dbReference type="IntAct" id="P75054">
    <property type="interactions" value="4"/>
</dbReference>
<dbReference type="STRING" id="272634.MPN_061"/>
<dbReference type="EnsemblBacteria" id="AAB95741">
    <property type="protein sequence ID" value="AAB95741"/>
    <property type="gene ID" value="MPN_061"/>
</dbReference>
<dbReference type="KEGG" id="mpn:MPN_061"/>
<dbReference type="PATRIC" id="fig|272634.6.peg.62"/>
<dbReference type="HOGENOM" id="CLU_009301_6_0_14"/>
<dbReference type="OrthoDB" id="9804720at2"/>
<dbReference type="BioCyc" id="MPNE272634:G1GJ3-97-MONOMER"/>
<dbReference type="Proteomes" id="UP000000808">
    <property type="component" value="Chromosome"/>
</dbReference>
<dbReference type="GO" id="GO:0048500">
    <property type="term" value="C:signal recognition particle"/>
    <property type="evidence" value="ECO:0007669"/>
    <property type="project" value="UniProtKB-UniRule"/>
</dbReference>
<dbReference type="GO" id="GO:0008312">
    <property type="term" value="F:7S RNA binding"/>
    <property type="evidence" value="ECO:0007669"/>
    <property type="project" value="InterPro"/>
</dbReference>
<dbReference type="GO" id="GO:0016887">
    <property type="term" value="F:ATP hydrolysis activity"/>
    <property type="evidence" value="ECO:0007669"/>
    <property type="project" value="InterPro"/>
</dbReference>
<dbReference type="GO" id="GO:0005525">
    <property type="term" value="F:GTP binding"/>
    <property type="evidence" value="ECO:0007669"/>
    <property type="project" value="UniProtKB-UniRule"/>
</dbReference>
<dbReference type="GO" id="GO:0003924">
    <property type="term" value="F:GTPase activity"/>
    <property type="evidence" value="ECO:0007669"/>
    <property type="project" value="UniProtKB-UniRule"/>
</dbReference>
<dbReference type="GO" id="GO:0006614">
    <property type="term" value="P:SRP-dependent cotranslational protein targeting to membrane"/>
    <property type="evidence" value="ECO:0007669"/>
    <property type="project" value="InterPro"/>
</dbReference>
<dbReference type="CDD" id="cd18539">
    <property type="entry name" value="SRP_G"/>
    <property type="match status" value="1"/>
</dbReference>
<dbReference type="Gene3D" id="3.40.50.300">
    <property type="entry name" value="P-loop containing nucleotide triphosphate hydrolases"/>
    <property type="match status" value="1"/>
</dbReference>
<dbReference type="Gene3D" id="1.20.120.140">
    <property type="entry name" value="Signal recognition particle SRP54, nucleotide-binding domain"/>
    <property type="match status" value="1"/>
</dbReference>
<dbReference type="Gene3D" id="1.10.260.30">
    <property type="entry name" value="Signal recognition particle, SRP54 subunit, M-domain"/>
    <property type="match status" value="1"/>
</dbReference>
<dbReference type="HAMAP" id="MF_00306">
    <property type="entry name" value="SRP54"/>
    <property type="match status" value="1"/>
</dbReference>
<dbReference type="InterPro" id="IPR003593">
    <property type="entry name" value="AAA+_ATPase"/>
</dbReference>
<dbReference type="InterPro" id="IPR027417">
    <property type="entry name" value="P-loop_NTPase"/>
</dbReference>
<dbReference type="InterPro" id="IPR036891">
    <property type="entry name" value="Signal_recog_part_SRP54_M_sf"/>
</dbReference>
<dbReference type="InterPro" id="IPR013822">
    <property type="entry name" value="Signal_recog_particl_SRP54_hlx"/>
</dbReference>
<dbReference type="InterPro" id="IPR004125">
    <property type="entry name" value="Signal_recog_particle_SRP54_M"/>
</dbReference>
<dbReference type="InterPro" id="IPR004780">
    <property type="entry name" value="SRP"/>
</dbReference>
<dbReference type="InterPro" id="IPR036225">
    <property type="entry name" value="SRP/SRP_N"/>
</dbReference>
<dbReference type="InterPro" id="IPR022941">
    <property type="entry name" value="SRP54"/>
</dbReference>
<dbReference type="InterPro" id="IPR000897">
    <property type="entry name" value="SRP54_GTPase_dom"/>
</dbReference>
<dbReference type="InterPro" id="IPR042101">
    <property type="entry name" value="SRP54_N_sf"/>
</dbReference>
<dbReference type="NCBIfam" id="TIGR00959">
    <property type="entry name" value="ffh"/>
    <property type="match status" value="1"/>
</dbReference>
<dbReference type="PANTHER" id="PTHR11564">
    <property type="entry name" value="SIGNAL RECOGNITION PARTICLE 54K PROTEIN SRP54"/>
    <property type="match status" value="1"/>
</dbReference>
<dbReference type="PANTHER" id="PTHR11564:SF5">
    <property type="entry name" value="SIGNAL RECOGNITION PARTICLE SUBUNIT SRP54"/>
    <property type="match status" value="1"/>
</dbReference>
<dbReference type="Pfam" id="PF00448">
    <property type="entry name" value="SRP54"/>
    <property type="match status" value="1"/>
</dbReference>
<dbReference type="Pfam" id="PF02881">
    <property type="entry name" value="SRP54_N"/>
    <property type="match status" value="1"/>
</dbReference>
<dbReference type="Pfam" id="PF02978">
    <property type="entry name" value="SRP_SPB"/>
    <property type="match status" value="1"/>
</dbReference>
<dbReference type="SMART" id="SM00382">
    <property type="entry name" value="AAA"/>
    <property type="match status" value="1"/>
</dbReference>
<dbReference type="SMART" id="SM00962">
    <property type="entry name" value="SRP54"/>
    <property type="match status" value="1"/>
</dbReference>
<dbReference type="SMART" id="SM00963">
    <property type="entry name" value="SRP54_N"/>
    <property type="match status" value="1"/>
</dbReference>
<dbReference type="SUPFAM" id="SSF47364">
    <property type="entry name" value="Domain of the SRP/SRP receptor G-proteins"/>
    <property type="match status" value="1"/>
</dbReference>
<dbReference type="SUPFAM" id="SSF52540">
    <property type="entry name" value="P-loop containing nucleoside triphosphate hydrolases"/>
    <property type="match status" value="1"/>
</dbReference>
<dbReference type="SUPFAM" id="SSF47446">
    <property type="entry name" value="Signal peptide-binding domain"/>
    <property type="match status" value="1"/>
</dbReference>
<dbReference type="PROSITE" id="PS00300">
    <property type="entry name" value="SRP54"/>
    <property type="match status" value="1"/>
</dbReference>
<name>SRP54_MYCPN</name>
<evidence type="ECO:0000255" key="1">
    <source>
        <dbReference type="HAMAP-Rule" id="MF_00306"/>
    </source>
</evidence>
<keyword id="KW-0963">Cytoplasm</keyword>
<keyword id="KW-0342">GTP-binding</keyword>
<keyword id="KW-0378">Hydrolase</keyword>
<keyword id="KW-0547">Nucleotide-binding</keyword>
<keyword id="KW-1185">Reference proteome</keyword>
<keyword id="KW-0687">Ribonucleoprotein</keyword>
<keyword id="KW-0694">RNA-binding</keyword>
<keyword id="KW-0733">Signal recognition particle</keyword>
<protein>
    <recommendedName>
        <fullName evidence="1">Signal recognition particle protein</fullName>
        <ecNumber evidence="1">3.6.5.4</ecNumber>
    </recommendedName>
    <alternativeName>
        <fullName evidence="1">Fifty-four homolog</fullName>
    </alternativeName>
</protein>
<accession>P75054</accession>
<reference key="1">
    <citation type="journal article" date="1996" name="Nucleic Acids Res.">
        <title>Complete sequence analysis of the genome of the bacterium Mycoplasma pneumoniae.</title>
        <authorList>
            <person name="Himmelreich R."/>
            <person name="Hilbert H."/>
            <person name="Plagens H."/>
            <person name="Pirkl E."/>
            <person name="Li B.-C."/>
            <person name="Herrmann R."/>
        </authorList>
    </citation>
    <scope>NUCLEOTIDE SEQUENCE [LARGE SCALE GENOMIC DNA]</scope>
    <source>
        <strain>ATCC 29342 / M129 / Subtype 1</strain>
    </source>
</reference>
<organism>
    <name type="scientific">Mycoplasma pneumoniae (strain ATCC 29342 / M129 / Subtype 1)</name>
    <name type="common">Mycoplasmoides pneumoniae</name>
    <dbReference type="NCBI Taxonomy" id="272634"/>
    <lineage>
        <taxon>Bacteria</taxon>
        <taxon>Bacillati</taxon>
        <taxon>Mycoplasmatota</taxon>
        <taxon>Mycoplasmoidales</taxon>
        <taxon>Mycoplasmoidaceae</taxon>
        <taxon>Mycoplasmoides</taxon>
    </lineage>
</organism>
<proteinExistence type="inferred from homology"/>
<gene>
    <name evidence="1" type="primary">ffh</name>
    <name type="ordered locus">MPN_061</name>
    <name type="ORF">MP093</name>
</gene>
<sequence length="450" mass="50141">MFKSMISSIVMRSMQKKINAQTISETDVQAVLKEIRIALLDADVNLLVVKNFIKAIREQTVGQTVEPGQDLQKWLLKVIKQELINILSQPNQEITSKRPLKVMVVGLQGSGKTTTCGKLAVWLKKQFQQKAMLVALDIYRPAAIDQLATLAEQTESVFFAKGTQAPDQTTKEAVKTFKESGCQAIICDTAGRLQTNQELMDELVAIKNELHPDEILMVVDGLSGQEIINVAKEFHNRLKLTGFIITKLDSDARAGAALSLTSLLEVPIKLMGTSEKLTGLEQFHPERIASRILGLGDVMTLVEKAEEVFDKQSLTKTVSKMFLGKMDLEDLLLYMEQMNQMGSVSSIVKMLPGNLTVSDDHVESIEAKVKLWKVLINSMTREERRHPKLINRDPSRKQRIIKGSGRKMDELNKLMKEWSKLQTKTAEMGRMLKGGKNPFSGFGGLGGLGF</sequence>
<comment type="function">
    <text evidence="1">Involved in targeting and insertion of nascent membrane proteins into the cytoplasmic membrane. Binds to the hydrophobic signal sequence of the ribosome-nascent chain (RNC) as it emerges from the ribosomes. The SRP-RNC complex is then targeted to the cytoplasmic membrane where it interacts with the SRP receptor FtsY.</text>
</comment>
<comment type="catalytic activity">
    <reaction evidence="1">
        <text>GTP + H2O = GDP + phosphate + H(+)</text>
        <dbReference type="Rhea" id="RHEA:19669"/>
        <dbReference type="ChEBI" id="CHEBI:15377"/>
        <dbReference type="ChEBI" id="CHEBI:15378"/>
        <dbReference type="ChEBI" id="CHEBI:37565"/>
        <dbReference type="ChEBI" id="CHEBI:43474"/>
        <dbReference type="ChEBI" id="CHEBI:58189"/>
        <dbReference type="EC" id="3.6.5.4"/>
    </reaction>
</comment>
<comment type="subunit">
    <text evidence="1">Part of the signal recognition particle protein translocation system, which is composed of SRP and FtsY.</text>
</comment>
<comment type="subcellular location">
    <subcellularLocation>
        <location evidence="1">Cytoplasm</location>
    </subcellularLocation>
    <text evidence="1">The SRP-RNC complex is targeted to the cytoplasmic membrane.</text>
</comment>
<comment type="domain">
    <text evidence="1">Composed of three domains: the N-terminal N domain, which is responsible for interactions with the ribosome, the central G domain, which binds GTP, and the C-terminal M domain, which binds the RNA and the signal sequence of the RNC.</text>
</comment>
<comment type="similarity">
    <text evidence="1">Belongs to the GTP-binding SRP family. SRP54 subfamily.</text>
</comment>
<feature type="chain" id="PRO_0000101161" description="Signal recognition particle protein">
    <location>
        <begin position="1"/>
        <end position="450"/>
    </location>
</feature>
<feature type="binding site" evidence="1">
    <location>
        <begin position="106"/>
        <end position="113"/>
    </location>
    <ligand>
        <name>GTP</name>
        <dbReference type="ChEBI" id="CHEBI:37565"/>
    </ligand>
</feature>
<feature type="binding site" evidence="1">
    <location>
        <begin position="188"/>
        <end position="192"/>
    </location>
    <ligand>
        <name>GTP</name>
        <dbReference type="ChEBI" id="CHEBI:37565"/>
    </ligand>
</feature>
<feature type="binding site" evidence="1">
    <location>
        <begin position="246"/>
        <end position="249"/>
    </location>
    <ligand>
        <name>GTP</name>
        <dbReference type="ChEBI" id="CHEBI:37565"/>
    </ligand>
</feature>